<proteinExistence type="inferred from homology"/>
<gene>
    <name type="primary">foxA</name>
    <name type="ordered locus">STM0364</name>
</gene>
<protein>
    <recommendedName>
        <fullName>Ferrioxamine B receptor</fullName>
    </recommendedName>
</protein>
<name>FOXA_SALTY</name>
<sequence length="702" mass="77686">MPLEMFMFATTRMALLIGGAIGGATFPLFAQETTKNDTVIVTSPVQSGATKLATPDIETPQSVSIITRQQFEEQGATSVRQAVSYTPGVYSNQIGASNRFDYIVLRGFSDGSLDNVYLDGLKMMGDTNSHSSLVVDPWFLEDIEVVRGPASVLYGRSSPGGIVALTSRKPAFDAGGEVKLFAGNNNQRGAAFDVTGPLDDNERVAARLSGMTRYADSQFTPLKEERYALMPSLTWRITDRTRLDLMAYPHRDPEGGSHSGLPYQGTVVPYNGGKISNTFFEGEDDYDKYDRRENMVGYNIEHLFDNGWSVRQKLRYLHTKVTLNQVYAAGWLNETALNRGYSGSGEKMSAIALDNQLDGSVDTGAINHRLLVGIDYQDRSNHTTGYYGAFPPIDAFNPVYGAQPDYITLYSREKHKLRQTGYYLQDQMSWDRWRFTLGGRYDRVSVSNIDKLHDSRSDLDKNNVSTRAALLYLFDNGVAPYLSYSTAFTPTSFADENGNVLEPMKGKQWEAGVKYEPPGGNSQFSAAVYRINQTNIATKEEPTDPYRSIGEIESKGVELEAISHLSDSVRLQAAYTYTDIRYKKSSPQEQGKRAVYAPRNQASAWLSYDVKSGLLEGLTLGSGIRYVNGVTSDRLNTHTLPSYTLVDMVVGYDLSSIGLNGLSAQLNVNNLTDKRYVAACNSLSYCYFGAERSIVGSVSWAF</sequence>
<feature type="signal peptide" evidence="2">
    <location>
        <begin position="1"/>
        <end position="30"/>
    </location>
</feature>
<feature type="chain" id="PRO_0000034754" description="Ferrioxamine B receptor">
    <location>
        <begin position="31"/>
        <end position="702"/>
    </location>
</feature>
<feature type="domain" description="TBDR plug" evidence="3">
    <location>
        <begin position="55"/>
        <end position="168"/>
    </location>
</feature>
<feature type="domain" description="TBDR beta-barrel" evidence="3">
    <location>
        <begin position="173"/>
        <end position="702"/>
    </location>
</feature>
<keyword id="KW-0998">Cell outer membrane</keyword>
<keyword id="KW-0406">Ion transport</keyword>
<keyword id="KW-0408">Iron</keyword>
<keyword id="KW-0410">Iron transport</keyword>
<keyword id="KW-0472">Membrane</keyword>
<keyword id="KW-0675">Receptor</keyword>
<keyword id="KW-1185">Reference proteome</keyword>
<keyword id="KW-0732">Signal</keyword>
<keyword id="KW-0798">TonB box</keyword>
<keyword id="KW-0812">Transmembrane</keyword>
<keyword id="KW-1134">Transmembrane beta strand</keyword>
<keyword id="KW-0813">Transport</keyword>
<reference key="1">
    <citation type="journal article" date="2001" name="Nature">
        <title>Complete genome sequence of Salmonella enterica serovar Typhimurium LT2.</title>
        <authorList>
            <person name="McClelland M."/>
            <person name="Sanderson K.E."/>
            <person name="Spieth J."/>
            <person name="Clifton S.W."/>
            <person name="Latreille P."/>
            <person name="Courtney L."/>
            <person name="Porwollik S."/>
            <person name="Ali J."/>
            <person name="Dante M."/>
            <person name="Du F."/>
            <person name="Hou S."/>
            <person name="Layman D."/>
            <person name="Leonard S."/>
            <person name="Nguyen C."/>
            <person name="Scott K."/>
            <person name="Holmes A."/>
            <person name="Grewal N."/>
            <person name="Mulvaney E."/>
            <person name="Ryan E."/>
            <person name="Sun H."/>
            <person name="Florea L."/>
            <person name="Miller W."/>
            <person name="Stoneking T."/>
            <person name="Nhan M."/>
            <person name="Waterston R."/>
            <person name="Wilson R.K."/>
        </authorList>
    </citation>
    <scope>NUCLEOTIDE SEQUENCE [LARGE SCALE GENOMIC DNA]</scope>
    <source>
        <strain>LT2 / SGSC1412 / ATCC 700720</strain>
    </source>
</reference>
<reference key="2">
    <citation type="journal article" date="1995" name="J. Bacteriol.">
        <title>Fur regulon of Salmonella typhimurium: identification of new iron-regulated genes.</title>
        <authorList>
            <person name="Tsolis R.M."/>
            <person name="Baumler A.J."/>
            <person name="Stojiljkovic I."/>
            <person name="Heffron F."/>
        </authorList>
    </citation>
    <scope>NUCLEOTIDE SEQUENCE [GENOMIC DNA] OF 1-244</scope>
    <source>
        <strain>ATCC 14028 / SGSG 2980 / CDC 6516-60 / NCTC 12023</strain>
    </source>
</reference>
<comment type="function">
    <text evidence="1">Ferrioxamine binding and uptake, in association with the TonB protein.</text>
</comment>
<comment type="subcellular location">
    <subcellularLocation>
        <location evidence="3">Cell outer membrane</location>
        <topology evidence="3">Multi-pass membrane protein</topology>
    </subcellularLocation>
</comment>
<comment type="similarity">
    <text evidence="4">Belongs to the TonB-dependent receptor family.</text>
</comment>
<accession>P0CL48</accession>
<accession>Q56145</accession>
<evidence type="ECO:0000250" key="1"/>
<evidence type="ECO:0000255" key="2"/>
<evidence type="ECO:0000255" key="3">
    <source>
        <dbReference type="PROSITE-ProRule" id="PRU01360"/>
    </source>
</evidence>
<evidence type="ECO:0000305" key="4"/>
<dbReference type="EMBL" id="AE006468">
    <property type="protein sequence ID" value="AAL19318.1"/>
    <property type="molecule type" value="Genomic_DNA"/>
</dbReference>
<dbReference type="EMBL" id="U62282">
    <property type="protein sequence ID" value="AAB04552.1"/>
    <property type="molecule type" value="Genomic_DNA"/>
</dbReference>
<dbReference type="RefSeq" id="NP_459359.1">
    <property type="nucleotide sequence ID" value="NC_003197.2"/>
</dbReference>
<dbReference type="RefSeq" id="WP_001127727.1">
    <property type="nucleotide sequence ID" value="NC_003197.2"/>
</dbReference>
<dbReference type="SMR" id="P0CL48"/>
<dbReference type="STRING" id="99287.STM0364"/>
<dbReference type="PaxDb" id="99287-STM0364"/>
<dbReference type="GeneID" id="1251883"/>
<dbReference type="KEGG" id="stm:STM0364"/>
<dbReference type="PATRIC" id="fig|99287.12.peg.385"/>
<dbReference type="HOGENOM" id="CLU_008287_9_0_6"/>
<dbReference type="PhylomeDB" id="P0CL48"/>
<dbReference type="BioCyc" id="SENT99287:STM0364-MONOMER"/>
<dbReference type="Proteomes" id="UP000001014">
    <property type="component" value="Chromosome"/>
</dbReference>
<dbReference type="GO" id="GO:0009279">
    <property type="term" value="C:cell outer membrane"/>
    <property type="evidence" value="ECO:0000318"/>
    <property type="project" value="GO_Central"/>
</dbReference>
<dbReference type="GO" id="GO:0015344">
    <property type="term" value="F:siderophore uptake transmembrane transporter activity"/>
    <property type="evidence" value="ECO:0000318"/>
    <property type="project" value="GO_Central"/>
</dbReference>
<dbReference type="GO" id="GO:0038023">
    <property type="term" value="F:signaling receptor activity"/>
    <property type="evidence" value="ECO:0007669"/>
    <property type="project" value="InterPro"/>
</dbReference>
<dbReference type="GO" id="GO:0033214">
    <property type="term" value="P:siderophore-dependent iron import into cell"/>
    <property type="evidence" value="ECO:0000318"/>
    <property type="project" value="GO_Central"/>
</dbReference>
<dbReference type="CDD" id="cd01347">
    <property type="entry name" value="ligand_gated_channel"/>
    <property type="match status" value="1"/>
</dbReference>
<dbReference type="FunFam" id="2.170.130.10:FF:000001">
    <property type="entry name" value="Catecholate siderophore TonB-dependent receptor"/>
    <property type="match status" value="1"/>
</dbReference>
<dbReference type="FunFam" id="2.40.170.20:FF:000011">
    <property type="entry name" value="Ferrioxamine B receptor"/>
    <property type="match status" value="1"/>
</dbReference>
<dbReference type="Gene3D" id="2.40.170.20">
    <property type="entry name" value="TonB-dependent receptor, beta-barrel domain"/>
    <property type="match status" value="1"/>
</dbReference>
<dbReference type="Gene3D" id="2.170.130.10">
    <property type="entry name" value="TonB-dependent receptor, plug domain"/>
    <property type="match status" value="1"/>
</dbReference>
<dbReference type="InterPro" id="IPR012910">
    <property type="entry name" value="Plug_dom"/>
</dbReference>
<dbReference type="InterPro" id="IPR037066">
    <property type="entry name" value="Plug_dom_sf"/>
</dbReference>
<dbReference type="InterPro" id="IPR039426">
    <property type="entry name" value="TonB-dep_rcpt-like"/>
</dbReference>
<dbReference type="InterPro" id="IPR000531">
    <property type="entry name" value="TonB-dep_rcpt_b-brl"/>
</dbReference>
<dbReference type="InterPro" id="IPR036942">
    <property type="entry name" value="TonB_rcpt_b-brl_sf"/>
</dbReference>
<dbReference type="InterPro" id="IPR010105">
    <property type="entry name" value="TonB_sidphr_rcpt"/>
</dbReference>
<dbReference type="NCBIfam" id="TIGR01783">
    <property type="entry name" value="TonB-siderophor"/>
    <property type="match status" value="1"/>
</dbReference>
<dbReference type="PANTHER" id="PTHR32552">
    <property type="entry name" value="FERRICHROME IRON RECEPTOR-RELATED"/>
    <property type="match status" value="1"/>
</dbReference>
<dbReference type="PANTHER" id="PTHR32552:SF68">
    <property type="entry name" value="FERRICHROME OUTER MEMBRANE TRANSPORTER_PHAGE RECEPTOR"/>
    <property type="match status" value="1"/>
</dbReference>
<dbReference type="Pfam" id="PF07715">
    <property type="entry name" value="Plug"/>
    <property type="match status" value="1"/>
</dbReference>
<dbReference type="Pfam" id="PF00593">
    <property type="entry name" value="TonB_dep_Rec_b-barrel"/>
    <property type="match status" value="1"/>
</dbReference>
<dbReference type="SUPFAM" id="SSF56935">
    <property type="entry name" value="Porins"/>
    <property type="match status" value="1"/>
</dbReference>
<dbReference type="PROSITE" id="PS52016">
    <property type="entry name" value="TONB_DEPENDENT_REC_3"/>
    <property type="match status" value="1"/>
</dbReference>
<organism>
    <name type="scientific">Salmonella typhimurium (strain LT2 / SGSC1412 / ATCC 700720)</name>
    <dbReference type="NCBI Taxonomy" id="99287"/>
    <lineage>
        <taxon>Bacteria</taxon>
        <taxon>Pseudomonadati</taxon>
        <taxon>Pseudomonadota</taxon>
        <taxon>Gammaproteobacteria</taxon>
        <taxon>Enterobacterales</taxon>
        <taxon>Enterobacteriaceae</taxon>
        <taxon>Salmonella</taxon>
    </lineage>
</organism>